<gene>
    <name type="primary">ftsK</name>
    <name type="ordered locus">SPs1535</name>
</gene>
<dbReference type="EMBL" id="BA000034">
    <property type="protein sequence ID" value="BAC64630.1"/>
    <property type="molecule type" value="Genomic_DNA"/>
</dbReference>
<dbReference type="RefSeq" id="WP_011106874.1">
    <property type="nucleotide sequence ID" value="NC_004606.1"/>
</dbReference>
<dbReference type="SMR" id="P0DB17"/>
<dbReference type="KEGG" id="sps:SPs1535"/>
<dbReference type="HOGENOM" id="CLU_001981_9_6_9"/>
<dbReference type="GO" id="GO:0005886">
    <property type="term" value="C:plasma membrane"/>
    <property type="evidence" value="ECO:0007669"/>
    <property type="project" value="UniProtKB-SubCell"/>
</dbReference>
<dbReference type="GO" id="GO:0005524">
    <property type="term" value="F:ATP binding"/>
    <property type="evidence" value="ECO:0007669"/>
    <property type="project" value="UniProtKB-KW"/>
</dbReference>
<dbReference type="GO" id="GO:0016887">
    <property type="term" value="F:ATP hydrolysis activity"/>
    <property type="evidence" value="ECO:0007669"/>
    <property type="project" value="InterPro"/>
</dbReference>
<dbReference type="GO" id="GO:0003677">
    <property type="term" value="F:DNA binding"/>
    <property type="evidence" value="ECO:0007669"/>
    <property type="project" value="UniProtKB-KW"/>
</dbReference>
<dbReference type="GO" id="GO:0051301">
    <property type="term" value="P:cell division"/>
    <property type="evidence" value="ECO:0007669"/>
    <property type="project" value="UniProtKB-KW"/>
</dbReference>
<dbReference type="GO" id="GO:0007059">
    <property type="term" value="P:chromosome segregation"/>
    <property type="evidence" value="ECO:0007669"/>
    <property type="project" value="UniProtKB-KW"/>
</dbReference>
<dbReference type="CDD" id="cd01127">
    <property type="entry name" value="TrwB_TraG_TraD_VirD4"/>
    <property type="match status" value="1"/>
</dbReference>
<dbReference type="Gene3D" id="3.30.980.40">
    <property type="match status" value="1"/>
</dbReference>
<dbReference type="Gene3D" id="3.40.50.300">
    <property type="entry name" value="P-loop containing nucleotide triphosphate hydrolases"/>
    <property type="match status" value="1"/>
</dbReference>
<dbReference type="Gene3D" id="1.10.10.10">
    <property type="entry name" value="Winged helix-like DNA-binding domain superfamily/Winged helix DNA-binding domain"/>
    <property type="match status" value="1"/>
</dbReference>
<dbReference type="InterPro" id="IPR003593">
    <property type="entry name" value="AAA+_ATPase"/>
</dbReference>
<dbReference type="InterPro" id="IPR050206">
    <property type="entry name" value="FtsK/SpoIIIE/SftA"/>
</dbReference>
<dbReference type="InterPro" id="IPR041027">
    <property type="entry name" value="FtsK_alpha"/>
</dbReference>
<dbReference type="InterPro" id="IPR002543">
    <property type="entry name" value="FtsK_dom"/>
</dbReference>
<dbReference type="InterPro" id="IPR018541">
    <property type="entry name" value="Ftsk_gamma"/>
</dbReference>
<dbReference type="InterPro" id="IPR027417">
    <property type="entry name" value="P-loop_NTPase"/>
</dbReference>
<dbReference type="InterPro" id="IPR036388">
    <property type="entry name" value="WH-like_DNA-bd_sf"/>
</dbReference>
<dbReference type="InterPro" id="IPR036390">
    <property type="entry name" value="WH_DNA-bd_sf"/>
</dbReference>
<dbReference type="PANTHER" id="PTHR22683:SF41">
    <property type="entry name" value="DNA TRANSLOCASE FTSK"/>
    <property type="match status" value="1"/>
</dbReference>
<dbReference type="PANTHER" id="PTHR22683">
    <property type="entry name" value="SPORULATION PROTEIN RELATED"/>
    <property type="match status" value="1"/>
</dbReference>
<dbReference type="Pfam" id="PF17854">
    <property type="entry name" value="FtsK_alpha"/>
    <property type="match status" value="1"/>
</dbReference>
<dbReference type="Pfam" id="PF09397">
    <property type="entry name" value="FtsK_gamma"/>
    <property type="match status" value="1"/>
</dbReference>
<dbReference type="Pfam" id="PF01580">
    <property type="entry name" value="FtsK_SpoIIIE"/>
    <property type="match status" value="1"/>
</dbReference>
<dbReference type="SMART" id="SM00382">
    <property type="entry name" value="AAA"/>
    <property type="match status" value="1"/>
</dbReference>
<dbReference type="SMART" id="SM00843">
    <property type="entry name" value="Ftsk_gamma"/>
    <property type="match status" value="1"/>
</dbReference>
<dbReference type="SUPFAM" id="SSF52540">
    <property type="entry name" value="P-loop containing nucleoside triphosphate hydrolases"/>
    <property type="match status" value="1"/>
</dbReference>
<dbReference type="SUPFAM" id="SSF46785">
    <property type="entry name" value="Winged helix' DNA-binding domain"/>
    <property type="match status" value="1"/>
</dbReference>
<dbReference type="PROSITE" id="PS50901">
    <property type="entry name" value="FTSK"/>
    <property type="match status" value="1"/>
</dbReference>
<name>FTSK_STRPQ</name>
<evidence type="ECO:0000250" key="1"/>
<evidence type="ECO:0000255" key="2"/>
<evidence type="ECO:0000255" key="3">
    <source>
        <dbReference type="PROSITE-ProRule" id="PRU00289"/>
    </source>
</evidence>
<evidence type="ECO:0000256" key="4">
    <source>
        <dbReference type="SAM" id="MobiDB-lite"/>
    </source>
</evidence>
<evidence type="ECO:0000305" key="5"/>
<feature type="chain" id="PRO_0000411346" description="DNA translocase FtsK">
    <location>
        <begin position="1"/>
        <end position="801"/>
    </location>
</feature>
<feature type="transmembrane region" description="Helical" evidence="2">
    <location>
        <begin position="31"/>
        <end position="53"/>
    </location>
</feature>
<feature type="transmembrane region" description="Helical" evidence="2">
    <location>
        <begin position="58"/>
        <end position="80"/>
    </location>
</feature>
<feature type="transmembrane region" description="Helical" evidence="2">
    <location>
        <begin position="89"/>
        <end position="111"/>
    </location>
</feature>
<feature type="transmembrane region" description="Helical" evidence="2">
    <location>
        <begin position="131"/>
        <end position="150"/>
    </location>
</feature>
<feature type="transmembrane region" description="Helical" evidence="2">
    <location>
        <begin position="155"/>
        <end position="177"/>
    </location>
</feature>
<feature type="topological domain" description="Cytoplasmic" evidence="2">
    <location>
        <begin position="178"/>
        <end position="801"/>
    </location>
</feature>
<feature type="domain" description="FtsK" evidence="3">
    <location>
        <begin position="464"/>
        <end position="660"/>
    </location>
</feature>
<feature type="region of interest" description="Disordered" evidence="4">
    <location>
        <begin position="720"/>
        <end position="739"/>
    </location>
</feature>
<feature type="binding site" evidence="3">
    <location>
        <begin position="484"/>
        <end position="489"/>
    </location>
    <ligand>
        <name>ATP</name>
        <dbReference type="ChEBI" id="CHEBI:30616"/>
    </ligand>
</feature>
<sequence length="801" mass="89292">MVKRNQRKKSAPKKRLTKAEVEKQRAIKRMILSVLMALLLIFAMLRLGVFGVTTYNMIRFLVGSLAYPFMFAWLIYLFCFKWLRQKDGMIAGVVIAFLGLLVEWHAFLFAMPRMLDQDIFLGTARLITRDLLALRVTEFVGGGMLGALLYKPIAFLFSNIGSYFIGFLFILLGLFLMTPWDIYDVSHFVKEAVDKLAVAYQENKEKRFIKREEHRLQAEKEALEKQAQEEEKRLAELTVDPETGEIVEDSQSQVSYDLAEDMPKEPEILAYDSHLKDDEASLFDQEDLAYAHEEIGAYDSLSALASSEDEMDMDEPVEVDFTPKTHLLYKLPTIDLFVPDKPKNQSKEKNLVRKNIKVLEDTFQSFGIDVKVERAEIGPSVTKYEIKPAVGVRVNRISNLADDLALALAAKDVRIEAPIPGKSLIGIEVPNSEIATVSFRELWEQSDANPENLLEVPLGKAVNGNARSFNLARMPHLLVAGSTGSGKSVAVNGIISSILMKARPDQVKFMMIDPKMVELSVYNDIPHLLIPVVTNPRKASKALQKVVDEMENRYELFSKIGVRNIAGYNTKVEEFNASSEQKQIPLPLIVVIVDELADLMMVASKEVEDAIIRLGQKARAAGIHMILATQRPSVDVISGLIKANVPSRMAFAVSSGTDSRTILDENGAEKLLGRGDMLFKPIDENHPVRLQGSFISDDDVERIVNFIKDQAEADYDDAFDPGEVSDNDPGFSGNGGAAEGDPLFEEAKALVLETQKASASMIQRRLSVGFNRATRLMDELEEAGVIGPAEGTKPRKVLQTN</sequence>
<reference key="1">
    <citation type="journal article" date="2003" name="Genome Res.">
        <title>Genome sequence of an M3 strain of Streptococcus pyogenes reveals a large-scale genomic rearrangement in invasive strains and new insights into phage evolution.</title>
        <authorList>
            <person name="Nakagawa I."/>
            <person name="Kurokawa K."/>
            <person name="Yamashita A."/>
            <person name="Nakata M."/>
            <person name="Tomiyasu Y."/>
            <person name="Okahashi N."/>
            <person name="Kawabata S."/>
            <person name="Yamazaki K."/>
            <person name="Shiba T."/>
            <person name="Yasunaga T."/>
            <person name="Hayashi H."/>
            <person name="Hattori M."/>
            <person name="Hamada S."/>
        </authorList>
    </citation>
    <scope>NUCLEOTIDE SEQUENCE [LARGE SCALE GENOMIC DNA]</scope>
    <source>
        <strain>SSI-1</strain>
    </source>
</reference>
<organism>
    <name type="scientific">Streptococcus pyogenes serotype M3 (strain SSI-1)</name>
    <dbReference type="NCBI Taxonomy" id="193567"/>
    <lineage>
        <taxon>Bacteria</taxon>
        <taxon>Bacillati</taxon>
        <taxon>Bacillota</taxon>
        <taxon>Bacilli</taxon>
        <taxon>Lactobacillales</taxon>
        <taxon>Streptococcaceae</taxon>
        <taxon>Streptococcus</taxon>
    </lineage>
</organism>
<protein>
    <recommendedName>
        <fullName>DNA translocase FtsK</fullName>
    </recommendedName>
</protein>
<comment type="function">
    <text evidence="1">Essential cell division protein that coordinates cell division and chromosome segregation. The N-terminus is involved in assembly of the cell-division machinery. The C-terminus functions as a DNA motor that moves dsDNA in an ATP-dependent manner towards the difSL recombination site, which is located within the replication terminus region. Required for activation of the XerS recombinase, allowing activation of chromosome unlinking by recombination (By similarity).</text>
</comment>
<comment type="subunit">
    <text evidence="1">Homohexamer. Forms a ring that surrounds DNA (By similarity).</text>
</comment>
<comment type="subcellular location">
    <subcellularLocation>
        <location evidence="1">Cell membrane</location>
        <topology evidence="1">Multi-pass membrane protein</topology>
    </subcellularLocation>
    <text evidence="1">Located at the septum.</text>
</comment>
<comment type="domain">
    <text evidence="1">Consists of an N-terminal domain, which is sufficient for the localization to the septal ring and is required for cell division, followed by a linker domain, and a C-terminal domain, which forms the translocation motor involved in chromosome segregation. The C-terminal domain can be further subdivided into alpha, beta and gamma subdomains. The alpha and beta subdomains form the DNA pump, and the gamma subdomain is a regulatory subdomain (By similarity).</text>
</comment>
<comment type="similarity">
    <text evidence="5">Belongs to the FtsK/SpoIIIE/SftA family.</text>
</comment>
<proteinExistence type="inferred from homology"/>
<accession>P0DB17</accession>
<accession>Q878C9</accession>
<accession>Q8K8E8</accession>
<keyword id="KW-0067">ATP-binding</keyword>
<keyword id="KW-0131">Cell cycle</keyword>
<keyword id="KW-0132">Cell division</keyword>
<keyword id="KW-1003">Cell membrane</keyword>
<keyword id="KW-0159">Chromosome partition</keyword>
<keyword id="KW-0238">DNA-binding</keyword>
<keyword id="KW-0472">Membrane</keyword>
<keyword id="KW-0547">Nucleotide-binding</keyword>
<keyword id="KW-0812">Transmembrane</keyword>
<keyword id="KW-1133">Transmembrane helix</keyword>